<organism>
    <name type="scientific">Cytophaga hutchinsonii (strain ATCC 33406 / DSM 1761 / CIP 103989 / NBRC 15051 / NCIMB 9469 / D465)</name>
    <dbReference type="NCBI Taxonomy" id="269798"/>
    <lineage>
        <taxon>Bacteria</taxon>
        <taxon>Pseudomonadati</taxon>
        <taxon>Bacteroidota</taxon>
        <taxon>Cytophagia</taxon>
        <taxon>Cytophagales</taxon>
        <taxon>Cytophagaceae</taxon>
        <taxon>Cytophaga</taxon>
    </lineage>
</organism>
<reference key="1">
    <citation type="journal article" date="2007" name="Appl. Environ. Microbiol.">
        <title>Genome sequence of the cellulolytic gliding bacterium Cytophaga hutchinsonii.</title>
        <authorList>
            <person name="Xie G."/>
            <person name="Bruce D.C."/>
            <person name="Challacombe J.F."/>
            <person name="Chertkov O."/>
            <person name="Detter J.C."/>
            <person name="Gilna P."/>
            <person name="Han C.S."/>
            <person name="Lucas S."/>
            <person name="Misra M."/>
            <person name="Myers G.L."/>
            <person name="Richardson P."/>
            <person name="Tapia R."/>
            <person name="Thayer N."/>
            <person name="Thompson L.S."/>
            <person name="Brettin T.S."/>
            <person name="Henrissat B."/>
            <person name="Wilson D.B."/>
            <person name="McBride M.J."/>
        </authorList>
    </citation>
    <scope>NUCLEOTIDE SEQUENCE [LARGE SCALE GENOMIC DNA]</scope>
    <source>
        <strain>ATCC 33406 / DSM 1761 / JCM 20678 / CIP 103989 / IAM 12607 / NBRC 15051 / NCIMB 9469 / D465</strain>
    </source>
</reference>
<protein>
    <recommendedName>
        <fullName evidence="1">Large ribosomal subunit protein bL21</fullName>
    </recommendedName>
    <alternativeName>
        <fullName evidence="2">50S ribosomal protein L21</fullName>
    </alternativeName>
</protein>
<keyword id="KW-1185">Reference proteome</keyword>
<keyword id="KW-0687">Ribonucleoprotein</keyword>
<keyword id="KW-0689">Ribosomal protein</keyword>
<keyword id="KW-0694">RNA-binding</keyword>
<keyword id="KW-0699">rRNA-binding</keyword>
<accession>Q11XX4</accession>
<dbReference type="EMBL" id="CP000383">
    <property type="protein sequence ID" value="ABG57742.1"/>
    <property type="molecule type" value="Genomic_DNA"/>
</dbReference>
<dbReference type="RefSeq" id="WP_011583858.1">
    <property type="nucleotide sequence ID" value="NC_008255.1"/>
</dbReference>
<dbReference type="SMR" id="Q11XX4"/>
<dbReference type="STRING" id="269798.CHU_0453"/>
<dbReference type="KEGG" id="chu:CHU_0453"/>
<dbReference type="eggNOG" id="COG0261">
    <property type="taxonomic scope" value="Bacteria"/>
</dbReference>
<dbReference type="HOGENOM" id="CLU_061463_3_2_10"/>
<dbReference type="OrthoDB" id="9813334at2"/>
<dbReference type="Proteomes" id="UP000001822">
    <property type="component" value="Chromosome"/>
</dbReference>
<dbReference type="GO" id="GO:0005737">
    <property type="term" value="C:cytoplasm"/>
    <property type="evidence" value="ECO:0007669"/>
    <property type="project" value="UniProtKB-ARBA"/>
</dbReference>
<dbReference type="GO" id="GO:1990904">
    <property type="term" value="C:ribonucleoprotein complex"/>
    <property type="evidence" value="ECO:0007669"/>
    <property type="project" value="UniProtKB-KW"/>
</dbReference>
<dbReference type="GO" id="GO:0005840">
    <property type="term" value="C:ribosome"/>
    <property type="evidence" value="ECO:0007669"/>
    <property type="project" value="UniProtKB-KW"/>
</dbReference>
<dbReference type="GO" id="GO:0019843">
    <property type="term" value="F:rRNA binding"/>
    <property type="evidence" value="ECO:0007669"/>
    <property type="project" value="UniProtKB-UniRule"/>
</dbReference>
<dbReference type="GO" id="GO:0003735">
    <property type="term" value="F:structural constituent of ribosome"/>
    <property type="evidence" value="ECO:0007669"/>
    <property type="project" value="InterPro"/>
</dbReference>
<dbReference type="GO" id="GO:0006412">
    <property type="term" value="P:translation"/>
    <property type="evidence" value="ECO:0007669"/>
    <property type="project" value="UniProtKB-UniRule"/>
</dbReference>
<dbReference type="HAMAP" id="MF_01363">
    <property type="entry name" value="Ribosomal_bL21"/>
    <property type="match status" value="1"/>
</dbReference>
<dbReference type="InterPro" id="IPR028909">
    <property type="entry name" value="bL21-like"/>
</dbReference>
<dbReference type="InterPro" id="IPR036164">
    <property type="entry name" value="bL21-like_sf"/>
</dbReference>
<dbReference type="InterPro" id="IPR001787">
    <property type="entry name" value="Ribosomal_bL21"/>
</dbReference>
<dbReference type="InterPro" id="IPR018258">
    <property type="entry name" value="Ribosomal_bL21_CS"/>
</dbReference>
<dbReference type="NCBIfam" id="TIGR00061">
    <property type="entry name" value="L21"/>
    <property type="match status" value="1"/>
</dbReference>
<dbReference type="PANTHER" id="PTHR21349">
    <property type="entry name" value="50S RIBOSOMAL PROTEIN L21"/>
    <property type="match status" value="1"/>
</dbReference>
<dbReference type="PANTHER" id="PTHR21349:SF0">
    <property type="entry name" value="LARGE RIBOSOMAL SUBUNIT PROTEIN BL21M"/>
    <property type="match status" value="1"/>
</dbReference>
<dbReference type="Pfam" id="PF00829">
    <property type="entry name" value="Ribosomal_L21p"/>
    <property type="match status" value="1"/>
</dbReference>
<dbReference type="SUPFAM" id="SSF141091">
    <property type="entry name" value="L21p-like"/>
    <property type="match status" value="1"/>
</dbReference>
<dbReference type="PROSITE" id="PS01169">
    <property type="entry name" value="RIBOSOMAL_L21"/>
    <property type="match status" value="1"/>
</dbReference>
<feature type="chain" id="PRO_0000269309" description="Large ribosomal subunit protein bL21">
    <location>
        <begin position="1"/>
        <end position="102"/>
    </location>
</feature>
<evidence type="ECO:0000255" key="1">
    <source>
        <dbReference type="HAMAP-Rule" id="MF_01363"/>
    </source>
</evidence>
<evidence type="ECO:0000305" key="2"/>
<name>RL21_CYTH3</name>
<proteinExistence type="inferred from homology"/>
<sequence>MYAIVEIGGKQYKVEKDHFIYVYRLEGAEGSAVTFDNVLLLADNNQYQVGAPSVAGASVSGKILEHLKDDKVTAFKKKRRKGFRKTVGFRQSLTKVLITSLN</sequence>
<comment type="function">
    <text evidence="1">This protein binds to 23S rRNA in the presence of protein L20.</text>
</comment>
<comment type="subunit">
    <text evidence="1">Part of the 50S ribosomal subunit. Contacts protein L20.</text>
</comment>
<comment type="similarity">
    <text evidence="1">Belongs to the bacterial ribosomal protein bL21 family.</text>
</comment>
<gene>
    <name evidence="1" type="primary">rplU</name>
    <name type="ordered locus">CHU_0453</name>
</gene>